<dbReference type="EMBL" id="AE017180">
    <property type="protein sequence ID" value="AAR33444.2"/>
    <property type="molecule type" value="Genomic_DNA"/>
</dbReference>
<dbReference type="RefSeq" id="NP_951171.4">
    <property type="nucleotide sequence ID" value="NC_002939.5"/>
</dbReference>
<dbReference type="RefSeq" id="WP_010940785.1">
    <property type="nucleotide sequence ID" value="NC_002939.5"/>
</dbReference>
<dbReference type="SMR" id="Q74GY4"/>
<dbReference type="STRING" id="243231.GSU0109"/>
<dbReference type="EnsemblBacteria" id="AAR33444">
    <property type="protein sequence ID" value="AAR33444"/>
    <property type="gene ID" value="GSU0109"/>
</dbReference>
<dbReference type="KEGG" id="gsu:GSU0109"/>
<dbReference type="PATRIC" id="fig|243231.5.peg.109"/>
<dbReference type="eggNOG" id="COG0711">
    <property type="taxonomic scope" value="Bacteria"/>
</dbReference>
<dbReference type="HOGENOM" id="CLU_079215_3_2_7"/>
<dbReference type="InParanoid" id="Q74GY4"/>
<dbReference type="OrthoDB" id="5471016at2"/>
<dbReference type="Proteomes" id="UP000000577">
    <property type="component" value="Chromosome"/>
</dbReference>
<dbReference type="GO" id="GO:0005886">
    <property type="term" value="C:plasma membrane"/>
    <property type="evidence" value="ECO:0007669"/>
    <property type="project" value="UniProtKB-SubCell"/>
</dbReference>
<dbReference type="GO" id="GO:0045259">
    <property type="term" value="C:proton-transporting ATP synthase complex"/>
    <property type="evidence" value="ECO:0007669"/>
    <property type="project" value="UniProtKB-KW"/>
</dbReference>
<dbReference type="GO" id="GO:0046933">
    <property type="term" value="F:proton-transporting ATP synthase activity, rotational mechanism"/>
    <property type="evidence" value="ECO:0007669"/>
    <property type="project" value="UniProtKB-UniRule"/>
</dbReference>
<dbReference type="CDD" id="cd06503">
    <property type="entry name" value="ATP-synt_Fo_b"/>
    <property type="match status" value="1"/>
</dbReference>
<dbReference type="HAMAP" id="MF_01398">
    <property type="entry name" value="ATP_synth_b_bprime"/>
    <property type="match status" value="1"/>
</dbReference>
<dbReference type="InterPro" id="IPR002146">
    <property type="entry name" value="ATP_synth_b/b'su_bac/chlpt"/>
</dbReference>
<dbReference type="PANTHER" id="PTHR34264">
    <property type="entry name" value="ATP SYNTHASE SUBUNIT B, CHLOROPLASTIC"/>
    <property type="match status" value="1"/>
</dbReference>
<dbReference type="PANTHER" id="PTHR34264:SF3">
    <property type="entry name" value="ATP SYNTHASE SUBUNIT B, CHLOROPLASTIC"/>
    <property type="match status" value="1"/>
</dbReference>
<dbReference type="Pfam" id="PF00430">
    <property type="entry name" value="ATP-synt_B"/>
    <property type="match status" value="1"/>
</dbReference>
<protein>
    <recommendedName>
        <fullName evidence="1">ATP synthase subunit b</fullName>
    </recommendedName>
    <alternativeName>
        <fullName evidence="1">ATP synthase F(0) sector subunit b</fullName>
    </alternativeName>
    <alternativeName>
        <fullName evidence="1">ATPase subunit I</fullName>
    </alternativeName>
    <alternativeName>
        <fullName evidence="1">F-type ATPase subunit b</fullName>
        <shortName evidence="1">F-ATPase subunit b</shortName>
    </alternativeName>
</protein>
<proteinExistence type="inferred from homology"/>
<organism>
    <name type="scientific">Geobacter sulfurreducens (strain ATCC 51573 / DSM 12127 / PCA)</name>
    <dbReference type="NCBI Taxonomy" id="243231"/>
    <lineage>
        <taxon>Bacteria</taxon>
        <taxon>Pseudomonadati</taxon>
        <taxon>Thermodesulfobacteriota</taxon>
        <taxon>Desulfuromonadia</taxon>
        <taxon>Geobacterales</taxon>
        <taxon>Geobacteraceae</taxon>
        <taxon>Geobacter</taxon>
    </lineage>
</organism>
<comment type="function">
    <text evidence="1">F(1)F(0) ATP synthase produces ATP from ADP in the presence of a proton or sodium gradient. F-type ATPases consist of two structural domains, F(1) containing the extramembraneous catalytic core and F(0) containing the membrane proton channel, linked together by a central stalk and a peripheral stalk. During catalysis, ATP synthesis in the catalytic domain of F(1) is coupled via a rotary mechanism of the central stalk subunits to proton translocation.</text>
</comment>
<comment type="function">
    <text evidence="1">Component of the F(0) channel, it forms part of the peripheral stalk, linking F(1) to F(0).</text>
</comment>
<comment type="subunit">
    <text evidence="1">F-type ATPases have 2 components, F(1) - the catalytic core - and F(0) - the membrane proton channel. F(1) has five subunits: alpha(3), beta(3), gamma(1), delta(1), epsilon(1). F(0) has three main subunits: a(1), b(2) and c(10-14). The alpha and beta chains form an alternating ring which encloses part of the gamma chain. F(1) is attached to F(0) by a central stalk formed by the gamma and epsilon chains, while a peripheral stalk is formed by the delta and b chains.</text>
</comment>
<comment type="subcellular location">
    <subcellularLocation>
        <location evidence="1">Cell inner membrane</location>
        <topology evidence="1">Single-pass membrane protein</topology>
    </subcellularLocation>
</comment>
<comment type="similarity">
    <text evidence="1">Belongs to the ATPase B chain family.</text>
</comment>
<name>ATPF_GEOSL</name>
<reference key="1">
    <citation type="journal article" date="2003" name="Science">
        <title>Genome of Geobacter sulfurreducens: metal reduction in subsurface environments.</title>
        <authorList>
            <person name="Methe B.A."/>
            <person name="Nelson K.E."/>
            <person name="Eisen J.A."/>
            <person name="Paulsen I.T."/>
            <person name="Nelson W.C."/>
            <person name="Heidelberg J.F."/>
            <person name="Wu D."/>
            <person name="Wu M."/>
            <person name="Ward N.L."/>
            <person name="Beanan M.J."/>
            <person name="Dodson R.J."/>
            <person name="Madupu R."/>
            <person name="Brinkac L.M."/>
            <person name="Daugherty S.C."/>
            <person name="DeBoy R.T."/>
            <person name="Durkin A.S."/>
            <person name="Gwinn M.L."/>
            <person name="Kolonay J.F."/>
            <person name="Sullivan S.A."/>
            <person name="Haft D.H."/>
            <person name="Selengut J."/>
            <person name="Davidsen T.M."/>
            <person name="Zafar N."/>
            <person name="White O."/>
            <person name="Tran B."/>
            <person name="Romero C."/>
            <person name="Forberger H.A."/>
            <person name="Weidman J.F."/>
            <person name="Khouri H.M."/>
            <person name="Feldblyum T.V."/>
            <person name="Utterback T.R."/>
            <person name="Van Aken S.E."/>
            <person name="Lovley D.R."/>
            <person name="Fraser C.M."/>
        </authorList>
    </citation>
    <scope>NUCLEOTIDE SEQUENCE [LARGE SCALE GENOMIC DNA]</scope>
    <source>
        <strain>ATCC 51573 / DSM 12127 / PCA</strain>
    </source>
</reference>
<gene>
    <name evidence="1" type="primary">atpF</name>
    <name type="ordered locus">GSU0109</name>
</gene>
<sequence length="206" mass="22709">MAYAFKKNGLLKPFVSTAAICLLVAGTVVLCHASGGGEGAHHVDTGKQMKDFMWRVIDFIALAGVIVWALKKANAKGALADRSANVEKALREAEEARTAAEKKFAEYSEKLEKANQEIDGIYAAIRKEGELEKERIIAEARITAEKIREQATATATQEVLKARAELRDEAARLAVQMAEQALREAIKKDDQDRLVSEYLTKVENLH</sequence>
<feature type="chain" id="PRO_0000368503" description="ATP synthase subunit b">
    <location>
        <begin position="1"/>
        <end position="206"/>
    </location>
</feature>
<feature type="transmembrane region" description="Helical" evidence="1">
    <location>
        <begin position="10"/>
        <end position="30"/>
    </location>
</feature>
<keyword id="KW-0066">ATP synthesis</keyword>
<keyword id="KW-0997">Cell inner membrane</keyword>
<keyword id="KW-1003">Cell membrane</keyword>
<keyword id="KW-0138">CF(0)</keyword>
<keyword id="KW-0375">Hydrogen ion transport</keyword>
<keyword id="KW-0406">Ion transport</keyword>
<keyword id="KW-0472">Membrane</keyword>
<keyword id="KW-1185">Reference proteome</keyword>
<keyword id="KW-0812">Transmembrane</keyword>
<keyword id="KW-1133">Transmembrane helix</keyword>
<keyword id="KW-0813">Transport</keyword>
<accession>Q74GY4</accession>
<evidence type="ECO:0000255" key="1">
    <source>
        <dbReference type="HAMAP-Rule" id="MF_01398"/>
    </source>
</evidence>